<sequence length="302" mass="32293">MPQDQHLGVDKAKILIEALPYIQRFSGKTLVVKYGGNAMTDPELESSFARDIVLLKTVGLNPIVVHGGGPQVDSFLKQLGRESDRIDGMRVTDEATMEVVEMVLGGSVNKSIVNLINKHGGRAIGLTGQDGNLLRARKLLMEKQEEDGSIKHIDLGMVGEVTGVKTDVLEMFTQSDFIPVIAPLGVDEKGNTYNINADLVAGKVAEALGAEKLILLTNISGVLDENKNLLTGLTTQEVDRLIETGVIYGGMIPKVGCALDAVKGGVVSAHIVDGRVPHATLLEIFTDHGVGTLISNRTQTTH</sequence>
<organism>
    <name type="scientific">Acinetobacter baumannii (strain ACICU)</name>
    <dbReference type="NCBI Taxonomy" id="405416"/>
    <lineage>
        <taxon>Bacteria</taxon>
        <taxon>Pseudomonadati</taxon>
        <taxon>Pseudomonadota</taxon>
        <taxon>Gammaproteobacteria</taxon>
        <taxon>Moraxellales</taxon>
        <taxon>Moraxellaceae</taxon>
        <taxon>Acinetobacter</taxon>
        <taxon>Acinetobacter calcoaceticus/baumannii complex</taxon>
    </lineage>
</organism>
<comment type="function">
    <text evidence="1">Catalyzes the ATP-dependent phosphorylation of N-acetyl-L-glutamate.</text>
</comment>
<comment type="catalytic activity">
    <reaction evidence="1">
        <text>N-acetyl-L-glutamate + ATP = N-acetyl-L-glutamyl 5-phosphate + ADP</text>
        <dbReference type="Rhea" id="RHEA:14629"/>
        <dbReference type="ChEBI" id="CHEBI:30616"/>
        <dbReference type="ChEBI" id="CHEBI:44337"/>
        <dbReference type="ChEBI" id="CHEBI:57936"/>
        <dbReference type="ChEBI" id="CHEBI:456216"/>
        <dbReference type="EC" id="2.7.2.8"/>
    </reaction>
</comment>
<comment type="pathway">
    <text evidence="1">Amino-acid biosynthesis; L-arginine biosynthesis; N(2)-acetyl-L-ornithine from L-glutamate: step 2/4.</text>
</comment>
<comment type="subcellular location">
    <subcellularLocation>
        <location evidence="1">Cytoplasm</location>
    </subcellularLocation>
</comment>
<comment type="similarity">
    <text evidence="1">Belongs to the acetylglutamate kinase family. ArgB subfamily.</text>
</comment>
<name>ARGB_ACIBC</name>
<proteinExistence type="inferred from homology"/>
<dbReference type="EC" id="2.7.2.8" evidence="1"/>
<dbReference type="EMBL" id="CP000863">
    <property type="protein sequence ID" value="ACC56151.1"/>
    <property type="molecule type" value="Genomic_DNA"/>
</dbReference>
<dbReference type="RefSeq" id="WP_001135419.1">
    <property type="nucleotide sequence ID" value="NZ_CP031380.1"/>
</dbReference>
<dbReference type="SMR" id="B2HV30"/>
<dbReference type="GeneID" id="92892817"/>
<dbReference type="KEGG" id="abc:ACICU_00839"/>
<dbReference type="HOGENOM" id="CLU_053680_0_0_6"/>
<dbReference type="UniPathway" id="UPA00068">
    <property type="reaction ID" value="UER00107"/>
</dbReference>
<dbReference type="Proteomes" id="UP000008839">
    <property type="component" value="Chromosome"/>
</dbReference>
<dbReference type="GO" id="GO:0005737">
    <property type="term" value="C:cytoplasm"/>
    <property type="evidence" value="ECO:0007669"/>
    <property type="project" value="UniProtKB-SubCell"/>
</dbReference>
<dbReference type="GO" id="GO:0003991">
    <property type="term" value="F:acetylglutamate kinase activity"/>
    <property type="evidence" value="ECO:0007669"/>
    <property type="project" value="UniProtKB-UniRule"/>
</dbReference>
<dbReference type="GO" id="GO:0005524">
    <property type="term" value="F:ATP binding"/>
    <property type="evidence" value="ECO:0007669"/>
    <property type="project" value="UniProtKB-UniRule"/>
</dbReference>
<dbReference type="GO" id="GO:0042450">
    <property type="term" value="P:arginine biosynthetic process via ornithine"/>
    <property type="evidence" value="ECO:0007669"/>
    <property type="project" value="UniProtKB-UniRule"/>
</dbReference>
<dbReference type="GO" id="GO:0006526">
    <property type="term" value="P:L-arginine biosynthetic process"/>
    <property type="evidence" value="ECO:0007669"/>
    <property type="project" value="UniProtKB-UniPathway"/>
</dbReference>
<dbReference type="CDD" id="cd04250">
    <property type="entry name" value="AAK_NAGK-C"/>
    <property type="match status" value="1"/>
</dbReference>
<dbReference type="FunFam" id="3.40.1160.10:FF:000004">
    <property type="entry name" value="Acetylglutamate kinase"/>
    <property type="match status" value="1"/>
</dbReference>
<dbReference type="Gene3D" id="3.40.1160.10">
    <property type="entry name" value="Acetylglutamate kinase-like"/>
    <property type="match status" value="1"/>
</dbReference>
<dbReference type="HAMAP" id="MF_00082">
    <property type="entry name" value="ArgB"/>
    <property type="match status" value="1"/>
</dbReference>
<dbReference type="InterPro" id="IPR036393">
    <property type="entry name" value="AceGlu_kinase-like_sf"/>
</dbReference>
<dbReference type="InterPro" id="IPR004662">
    <property type="entry name" value="AcgluKinase_fam"/>
</dbReference>
<dbReference type="InterPro" id="IPR037528">
    <property type="entry name" value="ArgB"/>
</dbReference>
<dbReference type="InterPro" id="IPR001048">
    <property type="entry name" value="Asp/Glu/Uridylate_kinase"/>
</dbReference>
<dbReference type="InterPro" id="IPR041727">
    <property type="entry name" value="NAGK-C"/>
</dbReference>
<dbReference type="NCBIfam" id="TIGR00761">
    <property type="entry name" value="argB"/>
    <property type="match status" value="1"/>
</dbReference>
<dbReference type="PANTHER" id="PTHR23342">
    <property type="entry name" value="N-ACETYLGLUTAMATE SYNTHASE"/>
    <property type="match status" value="1"/>
</dbReference>
<dbReference type="PANTHER" id="PTHR23342:SF0">
    <property type="entry name" value="N-ACETYLGLUTAMATE SYNTHASE, MITOCHONDRIAL"/>
    <property type="match status" value="1"/>
</dbReference>
<dbReference type="Pfam" id="PF00696">
    <property type="entry name" value="AA_kinase"/>
    <property type="match status" value="1"/>
</dbReference>
<dbReference type="PIRSF" id="PIRSF000728">
    <property type="entry name" value="NAGK"/>
    <property type="match status" value="1"/>
</dbReference>
<dbReference type="SUPFAM" id="SSF53633">
    <property type="entry name" value="Carbamate kinase-like"/>
    <property type="match status" value="1"/>
</dbReference>
<evidence type="ECO:0000255" key="1">
    <source>
        <dbReference type="HAMAP-Rule" id="MF_00082"/>
    </source>
</evidence>
<protein>
    <recommendedName>
        <fullName evidence="1">Acetylglutamate kinase</fullName>
        <ecNumber evidence="1">2.7.2.8</ecNumber>
    </recommendedName>
    <alternativeName>
        <fullName evidence="1">N-acetyl-L-glutamate 5-phosphotransferase</fullName>
    </alternativeName>
    <alternativeName>
        <fullName evidence="1">NAG kinase</fullName>
        <shortName evidence="1">NAGK</shortName>
    </alternativeName>
</protein>
<reference key="1">
    <citation type="journal article" date="2008" name="Antimicrob. Agents Chemother.">
        <title>Whole-genome pyrosequencing of an epidemic multidrug-resistant Acinetobacter baumannii strain belonging to the European clone II group.</title>
        <authorList>
            <person name="Iacono M."/>
            <person name="Villa L."/>
            <person name="Fortini D."/>
            <person name="Bordoni R."/>
            <person name="Imperi F."/>
            <person name="Bonnal R.J."/>
            <person name="Sicheritz-Ponten T."/>
            <person name="De Bellis G."/>
            <person name="Visca P."/>
            <person name="Cassone A."/>
            <person name="Carattoli A."/>
        </authorList>
    </citation>
    <scope>NUCLEOTIDE SEQUENCE [LARGE SCALE GENOMIC DNA]</scope>
    <source>
        <strain>ACICU</strain>
    </source>
</reference>
<keyword id="KW-0028">Amino-acid biosynthesis</keyword>
<keyword id="KW-0055">Arginine biosynthesis</keyword>
<keyword id="KW-0067">ATP-binding</keyword>
<keyword id="KW-0963">Cytoplasm</keyword>
<keyword id="KW-0418">Kinase</keyword>
<keyword id="KW-0547">Nucleotide-binding</keyword>
<keyword id="KW-0808">Transferase</keyword>
<accession>B2HV30</accession>
<gene>
    <name evidence="1" type="primary">argB</name>
    <name type="ordered locus">ACICU_00839</name>
</gene>
<feature type="chain" id="PRO_1000092841" description="Acetylglutamate kinase">
    <location>
        <begin position="1"/>
        <end position="302"/>
    </location>
</feature>
<feature type="binding site" evidence="1">
    <location>
        <begin position="68"/>
        <end position="69"/>
    </location>
    <ligand>
        <name>substrate</name>
    </ligand>
</feature>
<feature type="binding site" evidence="1">
    <location>
        <position position="90"/>
    </location>
    <ligand>
        <name>substrate</name>
    </ligand>
</feature>
<feature type="binding site" evidence="1">
    <location>
        <position position="194"/>
    </location>
    <ligand>
        <name>substrate</name>
    </ligand>
</feature>
<feature type="site" description="Transition state stabilizer" evidence="1">
    <location>
        <position position="33"/>
    </location>
</feature>
<feature type="site" description="Transition state stabilizer" evidence="1">
    <location>
        <position position="254"/>
    </location>
</feature>